<organism>
    <name type="scientific">Mycobacterium bovis (strain BCG / Pasteur 1173P2)</name>
    <dbReference type="NCBI Taxonomy" id="410289"/>
    <lineage>
        <taxon>Bacteria</taxon>
        <taxon>Bacillati</taxon>
        <taxon>Actinomycetota</taxon>
        <taxon>Actinomycetes</taxon>
        <taxon>Mycobacteriales</taxon>
        <taxon>Mycobacteriaceae</taxon>
        <taxon>Mycobacterium</taxon>
        <taxon>Mycobacterium tuberculosis complex</taxon>
    </lineage>
</organism>
<comment type="function">
    <text evidence="1">Catalyzes the formation of pyridoxal 5'-phosphate from ribose 5-phosphate (RBP), glyceraldehyde 3-phosphate (G3P) and ammonia. The ammonia is provided by the PdxT subunit. Can also use ribulose 5-phosphate and dihydroxyacetone phosphate as substrates, resulting from enzyme-catalyzed isomerization of RBP and G3P, respectively.</text>
</comment>
<comment type="catalytic activity">
    <reaction evidence="1">
        <text>aldehydo-D-ribose 5-phosphate + D-glyceraldehyde 3-phosphate + L-glutamine = pyridoxal 5'-phosphate + L-glutamate + phosphate + 3 H2O + H(+)</text>
        <dbReference type="Rhea" id="RHEA:31507"/>
        <dbReference type="ChEBI" id="CHEBI:15377"/>
        <dbReference type="ChEBI" id="CHEBI:15378"/>
        <dbReference type="ChEBI" id="CHEBI:29985"/>
        <dbReference type="ChEBI" id="CHEBI:43474"/>
        <dbReference type="ChEBI" id="CHEBI:58273"/>
        <dbReference type="ChEBI" id="CHEBI:58359"/>
        <dbReference type="ChEBI" id="CHEBI:59776"/>
        <dbReference type="ChEBI" id="CHEBI:597326"/>
        <dbReference type="EC" id="4.3.3.6"/>
    </reaction>
</comment>
<comment type="pathway">
    <text evidence="1">Cofactor biosynthesis; pyridoxal 5'-phosphate biosynthesis.</text>
</comment>
<comment type="subunit">
    <text evidence="1">In the presence of PdxT, forms a dodecamer of heterodimers.</text>
</comment>
<comment type="similarity">
    <text evidence="1">Belongs to the PdxS/SNZ family.</text>
</comment>
<keyword id="KW-0456">Lyase</keyword>
<keyword id="KW-0663">Pyridoxal phosphate</keyword>
<keyword id="KW-0704">Schiff base</keyword>
<protein>
    <recommendedName>
        <fullName evidence="1">Pyridoxal 5'-phosphate synthase subunit PdxS</fullName>
        <shortName evidence="1">PLP synthase subunit PdxS</shortName>
        <ecNumber evidence="1">4.3.3.6</ecNumber>
    </recommendedName>
    <alternativeName>
        <fullName evidence="1">Pdx1</fullName>
    </alternativeName>
</protein>
<feature type="chain" id="PRO_1000070389" description="Pyridoxal 5'-phosphate synthase subunit PdxS">
    <location>
        <begin position="1"/>
        <end position="299"/>
    </location>
</feature>
<feature type="active site" description="Schiff-base intermediate with D-ribose 5-phosphate" evidence="1">
    <location>
        <position position="86"/>
    </location>
</feature>
<feature type="binding site" evidence="1">
    <location>
        <position position="29"/>
    </location>
    <ligand>
        <name>D-ribose 5-phosphate</name>
        <dbReference type="ChEBI" id="CHEBI:78346"/>
    </ligand>
</feature>
<feature type="binding site" evidence="1">
    <location>
        <position position="158"/>
    </location>
    <ligand>
        <name>D-ribose 5-phosphate</name>
        <dbReference type="ChEBI" id="CHEBI:78346"/>
    </ligand>
</feature>
<feature type="binding site" evidence="1">
    <location>
        <position position="170"/>
    </location>
    <ligand>
        <name>D-glyceraldehyde 3-phosphate</name>
        <dbReference type="ChEBI" id="CHEBI:59776"/>
    </ligand>
</feature>
<feature type="binding site" evidence="1">
    <location>
        <position position="219"/>
    </location>
    <ligand>
        <name>D-ribose 5-phosphate</name>
        <dbReference type="ChEBI" id="CHEBI:78346"/>
    </ligand>
</feature>
<feature type="binding site" evidence="1">
    <location>
        <begin position="240"/>
        <end position="241"/>
    </location>
    <ligand>
        <name>D-ribose 5-phosphate</name>
        <dbReference type="ChEBI" id="CHEBI:78346"/>
    </ligand>
</feature>
<name>PDXS_MYCBP</name>
<dbReference type="EC" id="4.3.3.6" evidence="1"/>
<dbReference type="EMBL" id="AM408590">
    <property type="protein sequence ID" value="CAL72619.1"/>
    <property type="molecule type" value="Genomic_DNA"/>
</dbReference>
<dbReference type="RefSeq" id="WP_003413468.1">
    <property type="nucleotide sequence ID" value="NC_008769.1"/>
</dbReference>
<dbReference type="SMR" id="A1KLV6"/>
<dbReference type="GeneID" id="45426609"/>
<dbReference type="KEGG" id="mbb:BCG_2631c"/>
<dbReference type="HOGENOM" id="CLU_055352_1_0_11"/>
<dbReference type="UniPathway" id="UPA00245"/>
<dbReference type="Proteomes" id="UP000001472">
    <property type="component" value="Chromosome"/>
</dbReference>
<dbReference type="GO" id="GO:0036381">
    <property type="term" value="F:pyridoxal 5'-phosphate synthase (glutamine hydrolysing) activity"/>
    <property type="evidence" value="ECO:0007669"/>
    <property type="project" value="UniProtKB-UniRule"/>
</dbReference>
<dbReference type="GO" id="GO:0006520">
    <property type="term" value="P:amino acid metabolic process"/>
    <property type="evidence" value="ECO:0007669"/>
    <property type="project" value="TreeGrafter"/>
</dbReference>
<dbReference type="GO" id="GO:0042823">
    <property type="term" value="P:pyridoxal phosphate biosynthetic process"/>
    <property type="evidence" value="ECO:0007669"/>
    <property type="project" value="UniProtKB-UniRule"/>
</dbReference>
<dbReference type="GO" id="GO:0008615">
    <property type="term" value="P:pyridoxine biosynthetic process"/>
    <property type="evidence" value="ECO:0007669"/>
    <property type="project" value="TreeGrafter"/>
</dbReference>
<dbReference type="CDD" id="cd04727">
    <property type="entry name" value="pdxS"/>
    <property type="match status" value="1"/>
</dbReference>
<dbReference type="FunFam" id="3.20.20.70:FF:000001">
    <property type="entry name" value="Pyridoxine biosynthesis protein PDX1"/>
    <property type="match status" value="1"/>
</dbReference>
<dbReference type="Gene3D" id="3.20.20.70">
    <property type="entry name" value="Aldolase class I"/>
    <property type="match status" value="1"/>
</dbReference>
<dbReference type="HAMAP" id="MF_01824">
    <property type="entry name" value="PdxS"/>
    <property type="match status" value="1"/>
</dbReference>
<dbReference type="InterPro" id="IPR013785">
    <property type="entry name" value="Aldolase_TIM"/>
</dbReference>
<dbReference type="InterPro" id="IPR001852">
    <property type="entry name" value="PdxS/SNZ"/>
</dbReference>
<dbReference type="InterPro" id="IPR033755">
    <property type="entry name" value="PdxS/SNZ_N"/>
</dbReference>
<dbReference type="InterPro" id="IPR011060">
    <property type="entry name" value="RibuloseP-bd_barrel"/>
</dbReference>
<dbReference type="NCBIfam" id="NF003215">
    <property type="entry name" value="PRK04180.1"/>
    <property type="match status" value="1"/>
</dbReference>
<dbReference type="NCBIfam" id="TIGR00343">
    <property type="entry name" value="pyridoxal 5'-phosphate synthase lyase subunit PdxS"/>
    <property type="match status" value="1"/>
</dbReference>
<dbReference type="PANTHER" id="PTHR31829">
    <property type="entry name" value="PYRIDOXAL 5'-PHOSPHATE SYNTHASE SUBUNIT SNZ1-RELATED"/>
    <property type="match status" value="1"/>
</dbReference>
<dbReference type="PANTHER" id="PTHR31829:SF0">
    <property type="entry name" value="PYRIDOXAL 5'-PHOSPHATE SYNTHASE SUBUNIT SNZ1-RELATED"/>
    <property type="match status" value="1"/>
</dbReference>
<dbReference type="Pfam" id="PF01680">
    <property type="entry name" value="SOR_SNZ"/>
    <property type="match status" value="1"/>
</dbReference>
<dbReference type="PIRSF" id="PIRSF029271">
    <property type="entry name" value="Pdx1"/>
    <property type="match status" value="1"/>
</dbReference>
<dbReference type="SUPFAM" id="SSF51366">
    <property type="entry name" value="Ribulose-phoshate binding barrel"/>
    <property type="match status" value="1"/>
</dbReference>
<dbReference type="PROSITE" id="PS01235">
    <property type="entry name" value="PDXS_SNZ_1"/>
    <property type="match status" value="1"/>
</dbReference>
<dbReference type="PROSITE" id="PS51129">
    <property type="entry name" value="PDXS_SNZ_2"/>
    <property type="match status" value="1"/>
</dbReference>
<reference key="1">
    <citation type="journal article" date="2007" name="Proc. Natl. Acad. Sci. U.S.A.">
        <title>Genome plasticity of BCG and impact on vaccine efficacy.</title>
        <authorList>
            <person name="Brosch R."/>
            <person name="Gordon S.V."/>
            <person name="Garnier T."/>
            <person name="Eiglmeier K."/>
            <person name="Frigui W."/>
            <person name="Valenti P."/>
            <person name="Dos Santos S."/>
            <person name="Duthoy S."/>
            <person name="Lacroix C."/>
            <person name="Garcia-Pelayo C."/>
            <person name="Inwald J.K."/>
            <person name="Golby P."/>
            <person name="Garcia J.N."/>
            <person name="Hewinson R.G."/>
            <person name="Behr M.A."/>
            <person name="Quail M.A."/>
            <person name="Churcher C."/>
            <person name="Barrell B.G."/>
            <person name="Parkhill J."/>
            <person name="Cole S.T."/>
        </authorList>
    </citation>
    <scope>NUCLEOTIDE SEQUENCE [LARGE SCALE GENOMIC DNA]</scope>
    <source>
        <strain>BCG / Pasteur 1173P2</strain>
    </source>
</reference>
<sequence>MDPAGNPATGTARVKRGMAEMLKGGVIMDVVTPEQARIAEGAGAVAVMALERVPADIRAQGGVSRMSDPDMIEGIIAAVTIPVMAKVRIGHFVEAQILQTLGVDYIDESEVLTPADYAHHIDKWNFTVPFVCGATNLGEALRRISEGAAMIRSKGEAGTGDVSNATTHMRAIGGEIRRLTSMSEDELFVAAKELQAPYELVAEVARAGKLPVTLFTAGGIATPADAAMMMQLGAEGVFVGSGIFKSGAPEHRAAAIVKATTFFDDPDVLAKVSRGLGEAMVGINVDEIAVGHRLAQRGW</sequence>
<proteinExistence type="inferred from homology"/>
<accession>A1KLV6</accession>
<evidence type="ECO:0000255" key="1">
    <source>
        <dbReference type="HAMAP-Rule" id="MF_01824"/>
    </source>
</evidence>
<gene>
    <name evidence="1" type="primary">pdxS</name>
    <name type="ordered locus">BCG_2631c</name>
</gene>